<name>Y1046_STAAT</name>
<organism>
    <name type="scientific">Staphylococcus aureus (strain USA300 / TCH1516)</name>
    <dbReference type="NCBI Taxonomy" id="451516"/>
    <lineage>
        <taxon>Bacteria</taxon>
        <taxon>Bacillati</taxon>
        <taxon>Bacillota</taxon>
        <taxon>Bacilli</taxon>
        <taxon>Bacillales</taxon>
        <taxon>Staphylococcaceae</taxon>
        <taxon>Staphylococcus</taxon>
    </lineage>
</organism>
<evidence type="ECO:0000255" key="1">
    <source>
        <dbReference type="HAMAP-Rule" id="MF_01851"/>
    </source>
</evidence>
<sequence>MTKYTFKPKDFKAFNVEGLDARMEALNEYIRPQLRELGEYFSDFFTSQTGETFYPHVAKHARRSVNPPKDTWVAFATNKRGYKMLPHFQIGMFEDQLFVMFGIMHEAKDKATRAKVFERKFKAIQQLPDDYRVCLDHMKPDKPFIKDLTDDDLIEAIQRAINVKKGEFFIARAITPQDKRLKSDKAFIAFLEETFDQFLPFYSA</sequence>
<reference key="1">
    <citation type="journal article" date="2007" name="BMC Microbiol.">
        <title>Subtle genetic changes enhance virulence of methicillin resistant and sensitive Staphylococcus aureus.</title>
        <authorList>
            <person name="Highlander S.K."/>
            <person name="Hulten K.G."/>
            <person name="Qin X."/>
            <person name="Jiang H."/>
            <person name="Yerrapragada S."/>
            <person name="Mason E.O. Jr."/>
            <person name="Shang Y."/>
            <person name="Williams T.M."/>
            <person name="Fortunov R.M."/>
            <person name="Liu Y."/>
            <person name="Igboeli O."/>
            <person name="Petrosino J."/>
            <person name="Tirumalai M."/>
            <person name="Uzman A."/>
            <person name="Fox G.E."/>
            <person name="Cardenas A.M."/>
            <person name="Muzny D.M."/>
            <person name="Hemphill L."/>
            <person name="Ding Y."/>
            <person name="Dugan S."/>
            <person name="Blyth P.R."/>
            <person name="Buhay C.J."/>
            <person name="Dinh H.H."/>
            <person name="Hawes A.C."/>
            <person name="Holder M."/>
            <person name="Kovar C.L."/>
            <person name="Lee S.L."/>
            <person name="Liu W."/>
            <person name="Nazareth L.V."/>
            <person name="Wang Q."/>
            <person name="Zhou J."/>
            <person name="Kaplan S.L."/>
            <person name="Weinstock G.M."/>
        </authorList>
    </citation>
    <scope>NUCLEOTIDE SEQUENCE [LARGE SCALE GENOMIC DNA]</scope>
    <source>
        <strain>USA300 / TCH1516</strain>
    </source>
</reference>
<protein>
    <recommendedName>
        <fullName evidence="1">UPF0637 protein USA300HOU_1046.1</fullName>
    </recommendedName>
</protein>
<feature type="chain" id="PRO_0000348331" description="UPF0637 protein USA300HOU_1046.1">
    <location>
        <begin position="1"/>
        <end position="204"/>
    </location>
</feature>
<dbReference type="EMBL" id="CP000730">
    <property type="status" value="NOT_ANNOTATED_CDS"/>
    <property type="molecule type" value="Genomic_DNA"/>
</dbReference>
<dbReference type="RefSeq" id="WP_000170610.1">
    <property type="nucleotide sequence ID" value="NC_010079.1"/>
</dbReference>
<dbReference type="SMR" id="P0C861"/>
<dbReference type="Gene3D" id="3.30.930.20">
    <property type="entry name" value="Protein of unknown function DUF1054"/>
    <property type="match status" value="1"/>
</dbReference>
<dbReference type="HAMAP" id="MF_01851">
    <property type="entry name" value="UPF0637"/>
    <property type="match status" value="1"/>
</dbReference>
<dbReference type="InterPro" id="IPR009403">
    <property type="entry name" value="UPF0637"/>
</dbReference>
<dbReference type="InterPro" id="IPR053707">
    <property type="entry name" value="UPF0637_domain_sf"/>
</dbReference>
<dbReference type="Pfam" id="PF06335">
    <property type="entry name" value="DUF1054"/>
    <property type="match status" value="1"/>
</dbReference>
<dbReference type="PIRSF" id="PIRSF021332">
    <property type="entry name" value="DUF1054"/>
    <property type="match status" value="1"/>
</dbReference>
<dbReference type="SUPFAM" id="SSF142913">
    <property type="entry name" value="YktB/PF0168-like"/>
    <property type="match status" value="1"/>
</dbReference>
<proteinExistence type="inferred from homology"/>
<accession>P0C861</accession>
<gene>
    <name type="ordered locus">USA300HOU_1046.1</name>
</gene>
<comment type="similarity">
    <text evidence="1">Belongs to the UPF0637 family.</text>
</comment>